<proteinExistence type="inferred from homology"/>
<reference key="1">
    <citation type="journal article" date="1999" name="DNA Res.">
        <title>Complete genome sequence of an aerobic hyper-thermophilic crenarchaeon, Aeropyrum pernix K1.</title>
        <authorList>
            <person name="Kawarabayasi Y."/>
            <person name="Hino Y."/>
            <person name="Horikawa H."/>
            <person name="Yamazaki S."/>
            <person name="Haikawa Y."/>
            <person name="Jin-no K."/>
            <person name="Takahashi M."/>
            <person name="Sekine M."/>
            <person name="Baba S."/>
            <person name="Ankai A."/>
            <person name="Kosugi H."/>
            <person name="Hosoyama A."/>
            <person name="Fukui S."/>
            <person name="Nagai Y."/>
            <person name="Nishijima K."/>
            <person name="Nakazawa H."/>
            <person name="Takamiya M."/>
            <person name="Masuda S."/>
            <person name="Funahashi T."/>
            <person name="Tanaka T."/>
            <person name="Kudoh Y."/>
            <person name="Yamazaki J."/>
            <person name="Kushida N."/>
            <person name="Oguchi A."/>
            <person name="Aoki K."/>
            <person name="Kubota K."/>
            <person name="Nakamura Y."/>
            <person name="Nomura N."/>
            <person name="Sako Y."/>
            <person name="Kikuchi H."/>
        </authorList>
    </citation>
    <scope>NUCLEOTIDE SEQUENCE [LARGE SCALE GENOMIC DNA]</scope>
    <source>
        <strain>ATCC 700893 / DSM 11879 / JCM 9820 / NBRC 100138 / K1</strain>
    </source>
</reference>
<evidence type="ECO:0000305" key="1"/>
<name>RS4E_AERPE</name>
<protein>
    <recommendedName>
        <fullName evidence="1">Small ribosomal subunit protein eS4</fullName>
    </recommendedName>
    <alternativeName>
        <fullName>30S ribosomal protein S4e</fullName>
    </alternativeName>
</protein>
<gene>
    <name type="primary">rps4e</name>
    <name type="ordered locus">APE_0356.1</name>
</gene>
<sequence>MARMGGQRRLKALAAPRFWPILRKEYKWAVKPRPGPHPAEKSLPLLLIVRNVLGYAQTAREARKLISEGHFRVDGVVRKDYKFPVGFMDVIEVVDTGEKFRMLPYPVKFFKLHPIPEEEGDLKPVRIENKTTVKGGHVQLNLHDGRNILVRVKDPRNPVEDVYRTMDTLLITVPGQEIKGHIKFGEGAIAIIVGGRNVGRVGVVKSVQKGWGRKRTLVTLEDASGNLFQTSLDYVFVIGLDRPVISLPEGAWK</sequence>
<accession>Q9YF85</accession>
<comment type="similarity">
    <text evidence="1">Belongs to the eukaryotic ribosomal protein eS4 family.</text>
</comment>
<feature type="chain" id="PRO_0000130844" description="Small ribosomal subunit protein eS4">
    <location>
        <begin position="1"/>
        <end position="253"/>
    </location>
</feature>
<feature type="domain" description="S4 RNA-binding">
    <location>
        <begin position="43"/>
        <end position="114"/>
    </location>
</feature>
<dbReference type="EMBL" id="BA000002">
    <property type="protein sequence ID" value="BAA79311.2"/>
    <property type="molecule type" value="Genomic_DNA"/>
</dbReference>
<dbReference type="PIR" id="C72727">
    <property type="entry name" value="C72727"/>
</dbReference>
<dbReference type="RefSeq" id="WP_010865688.1">
    <property type="nucleotide sequence ID" value="NC_000854.2"/>
</dbReference>
<dbReference type="SMR" id="Q9YF85"/>
<dbReference type="STRING" id="272557.APE_0356.1"/>
<dbReference type="EnsemblBacteria" id="BAA79311">
    <property type="protein sequence ID" value="BAA79311"/>
    <property type="gene ID" value="APE_0356.1"/>
</dbReference>
<dbReference type="GeneID" id="1444571"/>
<dbReference type="KEGG" id="ape:APE_0356.1"/>
<dbReference type="PATRIC" id="fig|272557.25.peg.274"/>
<dbReference type="eggNOG" id="arCOG04093">
    <property type="taxonomic scope" value="Archaea"/>
</dbReference>
<dbReference type="Proteomes" id="UP000002518">
    <property type="component" value="Chromosome"/>
</dbReference>
<dbReference type="GO" id="GO:0022627">
    <property type="term" value="C:cytosolic small ribosomal subunit"/>
    <property type="evidence" value="ECO:0007669"/>
    <property type="project" value="TreeGrafter"/>
</dbReference>
<dbReference type="GO" id="GO:0019843">
    <property type="term" value="F:rRNA binding"/>
    <property type="evidence" value="ECO:0007669"/>
    <property type="project" value="UniProtKB-KW"/>
</dbReference>
<dbReference type="GO" id="GO:0003735">
    <property type="term" value="F:structural constituent of ribosome"/>
    <property type="evidence" value="ECO:0007669"/>
    <property type="project" value="InterPro"/>
</dbReference>
<dbReference type="GO" id="GO:0006412">
    <property type="term" value="P:translation"/>
    <property type="evidence" value="ECO:0007669"/>
    <property type="project" value="UniProtKB-UniRule"/>
</dbReference>
<dbReference type="CDD" id="cd06087">
    <property type="entry name" value="KOW_RPS4"/>
    <property type="match status" value="1"/>
</dbReference>
<dbReference type="CDD" id="cd00165">
    <property type="entry name" value="S4"/>
    <property type="match status" value="1"/>
</dbReference>
<dbReference type="FunFam" id="3.10.290.10:FF:000002">
    <property type="entry name" value="40S ribosomal protein S4"/>
    <property type="match status" value="1"/>
</dbReference>
<dbReference type="Gene3D" id="2.30.30.30">
    <property type="match status" value="1"/>
</dbReference>
<dbReference type="Gene3D" id="2.40.50.740">
    <property type="match status" value="1"/>
</dbReference>
<dbReference type="Gene3D" id="3.10.290.10">
    <property type="entry name" value="RNA-binding S4 domain"/>
    <property type="match status" value="1"/>
</dbReference>
<dbReference type="HAMAP" id="MF_00485">
    <property type="entry name" value="Ribosomal_eS4"/>
    <property type="match status" value="1"/>
</dbReference>
<dbReference type="InterPro" id="IPR014722">
    <property type="entry name" value="Rib_uL2_dom2"/>
</dbReference>
<dbReference type="InterPro" id="IPR000876">
    <property type="entry name" value="Ribosomal_eS4"/>
</dbReference>
<dbReference type="InterPro" id="IPR013845">
    <property type="entry name" value="Ribosomal_eS4_central_region"/>
</dbReference>
<dbReference type="InterPro" id="IPR038237">
    <property type="entry name" value="Ribosomal_eS4_central_sf"/>
</dbReference>
<dbReference type="InterPro" id="IPR041982">
    <property type="entry name" value="Ribosomal_eS4_KOW"/>
</dbReference>
<dbReference type="InterPro" id="IPR013843">
    <property type="entry name" value="Ribosomal_eS4_N"/>
</dbReference>
<dbReference type="InterPro" id="IPR002942">
    <property type="entry name" value="S4_RNA-bd"/>
</dbReference>
<dbReference type="InterPro" id="IPR036986">
    <property type="entry name" value="S4_RNA-bd_sf"/>
</dbReference>
<dbReference type="NCBIfam" id="NF003312">
    <property type="entry name" value="PRK04313.1"/>
    <property type="match status" value="1"/>
</dbReference>
<dbReference type="PANTHER" id="PTHR11581">
    <property type="entry name" value="30S/40S RIBOSOMAL PROTEIN S4"/>
    <property type="match status" value="1"/>
</dbReference>
<dbReference type="PANTHER" id="PTHR11581:SF0">
    <property type="entry name" value="SMALL RIBOSOMAL SUBUNIT PROTEIN ES4"/>
    <property type="match status" value="1"/>
</dbReference>
<dbReference type="Pfam" id="PF00900">
    <property type="entry name" value="Ribosomal_S4e"/>
    <property type="match status" value="1"/>
</dbReference>
<dbReference type="Pfam" id="PF08071">
    <property type="entry name" value="RS4NT"/>
    <property type="match status" value="1"/>
</dbReference>
<dbReference type="Pfam" id="PF01479">
    <property type="entry name" value="S4"/>
    <property type="match status" value="1"/>
</dbReference>
<dbReference type="PIRSF" id="PIRSF002116">
    <property type="entry name" value="Ribosomal_S4"/>
    <property type="match status" value="1"/>
</dbReference>
<dbReference type="SMART" id="SM00363">
    <property type="entry name" value="S4"/>
    <property type="match status" value="1"/>
</dbReference>
<dbReference type="SUPFAM" id="SSF55174">
    <property type="entry name" value="Alpha-L RNA-binding motif"/>
    <property type="match status" value="1"/>
</dbReference>
<dbReference type="PROSITE" id="PS50889">
    <property type="entry name" value="S4"/>
    <property type="match status" value="1"/>
</dbReference>
<organism>
    <name type="scientific">Aeropyrum pernix (strain ATCC 700893 / DSM 11879 / JCM 9820 / NBRC 100138 / K1)</name>
    <dbReference type="NCBI Taxonomy" id="272557"/>
    <lineage>
        <taxon>Archaea</taxon>
        <taxon>Thermoproteota</taxon>
        <taxon>Thermoprotei</taxon>
        <taxon>Desulfurococcales</taxon>
        <taxon>Desulfurococcaceae</taxon>
        <taxon>Aeropyrum</taxon>
    </lineage>
</organism>
<keyword id="KW-1185">Reference proteome</keyword>
<keyword id="KW-0687">Ribonucleoprotein</keyword>
<keyword id="KW-0689">Ribosomal protein</keyword>
<keyword id="KW-0694">RNA-binding</keyword>
<keyword id="KW-0699">rRNA-binding</keyword>